<feature type="chain" id="PRO_0000350120" description="Probable dual-specificity RNA methyltransferase RlmN">
    <location>
        <begin position="1"/>
        <end position="342"/>
    </location>
</feature>
<feature type="domain" description="Radical SAM core" evidence="2">
    <location>
        <begin position="97"/>
        <end position="327"/>
    </location>
</feature>
<feature type="active site" description="Proton acceptor" evidence="1">
    <location>
        <position position="91"/>
    </location>
</feature>
<feature type="active site" description="S-methylcysteine intermediate" evidence="1">
    <location>
        <position position="332"/>
    </location>
</feature>
<feature type="binding site" evidence="1">
    <location>
        <position position="111"/>
    </location>
    <ligand>
        <name>[4Fe-4S] cluster</name>
        <dbReference type="ChEBI" id="CHEBI:49883"/>
        <note>4Fe-4S-S-AdoMet</note>
    </ligand>
</feature>
<feature type="binding site" evidence="1">
    <location>
        <position position="115"/>
    </location>
    <ligand>
        <name>[4Fe-4S] cluster</name>
        <dbReference type="ChEBI" id="CHEBI:49883"/>
        <note>4Fe-4S-S-AdoMet</note>
    </ligand>
</feature>
<feature type="binding site" evidence="1">
    <location>
        <position position="118"/>
    </location>
    <ligand>
        <name>[4Fe-4S] cluster</name>
        <dbReference type="ChEBI" id="CHEBI:49883"/>
        <note>4Fe-4S-S-AdoMet</note>
    </ligand>
</feature>
<feature type="binding site" evidence="1">
    <location>
        <begin position="158"/>
        <end position="159"/>
    </location>
    <ligand>
        <name>S-adenosyl-L-methionine</name>
        <dbReference type="ChEBI" id="CHEBI:59789"/>
    </ligand>
</feature>
<feature type="binding site" evidence="1">
    <location>
        <position position="190"/>
    </location>
    <ligand>
        <name>S-adenosyl-L-methionine</name>
        <dbReference type="ChEBI" id="CHEBI:59789"/>
    </ligand>
</feature>
<feature type="binding site" evidence="1">
    <location>
        <begin position="213"/>
        <end position="215"/>
    </location>
    <ligand>
        <name>S-adenosyl-L-methionine</name>
        <dbReference type="ChEBI" id="CHEBI:59789"/>
    </ligand>
</feature>
<feature type="binding site" evidence="1">
    <location>
        <position position="289"/>
    </location>
    <ligand>
        <name>S-adenosyl-L-methionine</name>
        <dbReference type="ChEBI" id="CHEBI:59789"/>
    </ligand>
</feature>
<feature type="disulfide bond" description="(transient)" evidence="1">
    <location>
        <begin position="104"/>
        <end position="332"/>
    </location>
</feature>
<proteinExistence type="inferred from homology"/>
<organism>
    <name type="scientific">Clostridium botulinum (strain Loch Maree / Type A3)</name>
    <dbReference type="NCBI Taxonomy" id="498214"/>
    <lineage>
        <taxon>Bacteria</taxon>
        <taxon>Bacillati</taxon>
        <taxon>Bacillota</taxon>
        <taxon>Clostridia</taxon>
        <taxon>Eubacteriales</taxon>
        <taxon>Clostridiaceae</taxon>
        <taxon>Clostridium</taxon>
    </lineage>
</organism>
<protein>
    <recommendedName>
        <fullName evidence="1">Probable dual-specificity RNA methyltransferase RlmN</fullName>
        <ecNumber evidence="1">2.1.1.192</ecNumber>
    </recommendedName>
    <alternativeName>
        <fullName evidence="1">23S rRNA (adenine(2503)-C(2))-methyltransferase</fullName>
    </alternativeName>
    <alternativeName>
        <fullName evidence="1">23S rRNA m2A2503 methyltransferase</fullName>
    </alternativeName>
    <alternativeName>
        <fullName evidence="1">Ribosomal RNA large subunit methyltransferase N</fullName>
    </alternativeName>
    <alternativeName>
        <fullName evidence="1">tRNA (adenine(37)-C(2))-methyltransferase</fullName>
    </alternativeName>
    <alternativeName>
        <fullName evidence="1">tRNA m2A37 methyltransferase</fullName>
    </alternativeName>
</protein>
<keyword id="KW-0004">4Fe-4S</keyword>
<keyword id="KW-0963">Cytoplasm</keyword>
<keyword id="KW-1015">Disulfide bond</keyword>
<keyword id="KW-0408">Iron</keyword>
<keyword id="KW-0411">Iron-sulfur</keyword>
<keyword id="KW-0479">Metal-binding</keyword>
<keyword id="KW-0489">Methyltransferase</keyword>
<keyword id="KW-0698">rRNA processing</keyword>
<keyword id="KW-0949">S-adenosyl-L-methionine</keyword>
<keyword id="KW-0808">Transferase</keyword>
<keyword id="KW-0819">tRNA processing</keyword>
<name>RLMN_CLOBM</name>
<gene>
    <name evidence="1" type="primary">rlmN</name>
    <name type="ordered locus">CLK_1888</name>
</gene>
<accession>B1KX56</accession>
<sequence>MENILDFTLEELKEWLISKEEKAFRAKQVFDWIYNKLIFDFNNMKNIPYKTKNLLSDNFYIGVPKVVKKLMSQDKNTYKFLFEYNDGNIIESVVMKYKHGNSICVSTQVGCRMGCKFCASTLDGVIRNLTSGEILSQIMAAQKEIGERISNVVLMGSGEPLDNFKNVTEFLDLVTSDTTLNIGQRHITLSTCGIVPKIKELADKNYNITLAISLHSPEDLLRKEMMPIANKYSIKELMEACDYYINKTNRRITFEYALVKGKNDSIKEAKKLSTVLKGKLCHVNLIPVNEIKENSYEKSTLKNIESFGNILKENGIETTIRREMGADINAACGQLRRSYVSK</sequence>
<reference key="1">
    <citation type="journal article" date="2007" name="PLoS ONE">
        <title>Analysis of the neurotoxin complex genes in Clostridium botulinum A1-A4 and B1 strains: BoNT/A3, /Ba4 and /B1 clusters are located within plasmids.</title>
        <authorList>
            <person name="Smith T.J."/>
            <person name="Hill K.K."/>
            <person name="Foley B.T."/>
            <person name="Detter J.C."/>
            <person name="Munk A.C."/>
            <person name="Bruce D.C."/>
            <person name="Doggett N.A."/>
            <person name="Smith L.A."/>
            <person name="Marks J.D."/>
            <person name="Xie G."/>
            <person name="Brettin T.S."/>
        </authorList>
    </citation>
    <scope>NUCLEOTIDE SEQUENCE [LARGE SCALE GENOMIC DNA]</scope>
    <source>
        <strain>Loch Maree / Type A3</strain>
    </source>
</reference>
<dbReference type="EC" id="2.1.1.192" evidence="1"/>
<dbReference type="EMBL" id="CP000962">
    <property type="protein sequence ID" value="ACA54695.1"/>
    <property type="molecule type" value="Genomic_DNA"/>
</dbReference>
<dbReference type="RefSeq" id="WP_012342768.1">
    <property type="nucleotide sequence ID" value="NC_010520.1"/>
</dbReference>
<dbReference type="SMR" id="B1KX56"/>
<dbReference type="KEGG" id="cbl:CLK_1888"/>
<dbReference type="HOGENOM" id="CLU_029101_0_1_9"/>
<dbReference type="GO" id="GO:0005737">
    <property type="term" value="C:cytoplasm"/>
    <property type="evidence" value="ECO:0007669"/>
    <property type="project" value="UniProtKB-SubCell"/>
</dbReference>
<dbReference type="GO" id="GO:0051539">
    <property type="term" value="F:4 iron, 4 sulfur cluster binding"/>
    <property type="evidence" value="ECO:0007669"/>
    <property type="project" value="UniProtKB-UniRule"/>
</dbReference>
<dbReference type="GO" id="GO:0046872">
    <property type="term" value="F:metal ion binding"/>
    <property type="evidence" value="ECO:0007669"/>
    <property type="project" value="UniProtKB-KW"/>
</dbReference>
<dbReference type="GO" id="GO:0070040">
    <property type="term" value="F:rRNA (adenine(2503)-C2-)-methyltransferase activity"/>
    <property type="evidence" value="ECO:0007669"/>
    <property type="project" value="UniProtKB-UniRule"/>
</dbReference>
<dbReference type="GO" id="GO:0019843">
    <property type="term" value="F:rRNA binding"/>
    <property type="evidence" value="ECO:0007669"/>
    <property type="project" value="UniProtKB-UniRule"/>
</dbReference>
<dbReference type="GO" id="GO:0002935">
    <property type="term" value="F:tRNA (adenine(37)-C2)-methyltransferase activity"/>
    <property type="evidence" value="ECO:0007669"/>
    <property type="project" value="UniProtKB-UniRule"/>
</dbReference>
<dbReference type="GO" id="GO:0000049">
    <property type="term" value="F:tRNA binding"/>
    <property type="evidence" value="ECO:0007669"/>
    <property type="project" value="UniProtKB-UniRule"/>
</dbReference>
<dbReference type="GO" id="GO:0070475">
    <property type="term" value="P:rRNA base methylation"/>
    <property type="evidence" value="ECO:0007669"/>
    <property type="project" value="UniProtKB-UniRule"/>
</dbReference>
<dbReference type="GO" id="GO:0030488">
    <property type="term" value="P:tRNA methylation"/>
    <property type="evidence" value="ECO:0007669"/>
    <property type="project" value="UniProtKB-UniRule"/>
</dbReference>
<dbReference type="CDD" id="cd01335">
    <property type="entry name" value="Radical_SAM"/>
    <property type="match status" value="1"/>
</dbReference>
<dbReference type="FunFam" id="3.20.20.70:FF:000014">
    <property type="entry name" value="Probable dual-specificity RNA methyltransferase RlmN"/>
    <property type="match status" value="1"/>
</dbReference>
<dbReference type="Gene3D" id="1.10.150.530">
    <property type="match status" value="1"/>
</dbReference>
<dbReference type="Gene3D" id="3.20.20.70">
    <property type="entry name" value="Aldolase class I"/>
    <property type="match status" value="1"/>
</dbReference>
<dbReference type="HAMAP" id="MF_01849">
    <property type="entry name" value="RNA_methyltr_RlmN"/>
    <property type="match status" value="1"/>
</dbReference>
<dbReference type="InterPro" id="IPR013785">
    <property type="entry name" value="Aldolase_TIM"/>
</dbReference>
<dbReference type="InterPro" id="IPR040072">
    <property type="entry name" value="Methyltransferase_A"/>
</dbReference>
<dbReference type="InterPro" id="IPR048641">
    <property type="entry name" value="RlmN_N"/>
</dbReference>
<dbReference type="InterPro" id="IPR027492">
    <property type="entry name" value="RNA_MTrfase_RlmN"/>
</dbReference>
<dbReference type="InterPro" id="IPR004383">
    <property type="entry name" value="rRNA_lsu_MTrfase_RlmN/Cfr"/>
</dbReference>
<dbReference type="InterPro" id="IPR007197">
    <property type="entry name" value="rSAM"/>
</dbReference>
<dbReference type="NCBIfam" id="TIGR00048">
    <property type="entry name" value="rRNA_mod_RlmN"/>
    <property type="match status" value="1"/>
</dbReference>
<dbReference type="PANTHER" id="PTHR30544">
    <property type="entry name" value="23S RRNA METHYLTRANSFERASE"/>
    <property type="match status" value="1"/>
</dbReference>
<dbReference type="PANTHER" id="PTHR30544:SF5">
    <property type="entry name" value="RADICAL SAM CORE DOMAIN-CONTAINING PROTEIN"/>
    <property type="match status" value="1"/>
</dbReference>
<dbReference type="Pfam" id="PF04055">
    <property type="entry name" value="Radical_SAM"/>
    <property type="match status" value="1"/>
</dbReference>
<dbReference type="Pfam" id="PF21016">
    <property type="entry name" value="RlmN_N"/>
    <property type="match status" value="1"/>
</dbReference>
<dbReference type="PIRSF" id="PIRSF006004">
    <property type="entry name" value="CHP00048"/>
    <property type="match status" value="1"/>
</dbReference>
<dbReference type="SFLD" id="SFLDF00275">
    <property type="entry name" value="adenosine_C2_methyltransferase"/>
    <property type="match status" value="1"/>
</dbReference>
<dbReference type="SFLD" id="SFLDG01062">
    <property type="entry name" value="methyltransferase_(Class_A)"/>
    <property type="match status" value="1"/>
</dbReference>
<dbReference type="SUPFAM" id="SSF102114">
    <property type="entry name" value="Radical SAM enzymes"/>
    <property type="match status" value="1"/>
</dbReference>
<dbReference type="PROSITE" id="PS51918">
    <property type="entry name" value="RADICAL_SAM"/>
    <property type="match status" value="1"/>
</dbReference>
<comment type="function">
    <text evidence="1">Specifically methylates position 2 of adenine 2503 in 23S rRNA and position 2 of adenine 37 in tRNAs.</text>
</comment>
<comment type="catalytic activity">
    <reaction evidence="1">
        <text>adenosine(2503) in 23S rRNA + 2 reduced [2Fe-2S]-[ferredoxin] + 2 S-adenosyl-L-methionine = 2-methyladenosine(2503) in 23S rRNA + 5'-deoxyadenosine + L-methionine + 2 oxidized [2Fe-2S]-[ferredoxin] + S-adenosyl-L-homocysteine</text>
        <dbReference type="Rhea" id="RHEA:42916"/>
        <dbReference type="Rhea" id="RHEA-COMP:10000"/>
        <dbReference type="Rhea" id="RHEA-COMP:10001"/>
        <dbReference type="Rhea" id="RHEA-COMP:10152"/>
        <dbReference type="Rhea" id="RHEA-COMP:10282"/>
        <dbReference type="ChEBI" id="CHEBI:17319"/>
        <dbReference type="ChEBI" id="CHEBI:33737"/>
        <dbReference type="ChEBI" id="CHEBI:33738"/>
        <dbReference type="ChEBI" id="CHEBI:57844"/>
        <dbReference type="ChEBI" id="CHEBI:57856"/>
        <dbReference type="ChEBI" id="CHEBI:59789"/>
        <dbReference type="ChEBI" id="CHEBI:74411"/>
        <dbReference type="ChEBI" id="CHEBI:74497"/>
        <dbReference type="EC" id="2.1.1.192"/>
    </reaction>
</comment>
<comment type="catalytic activity">
    <reaction evidence="1">
        <text>adenosine(37) in tRNA + 2 reduced [2Fe-2S]-[ferredoxin] + 2 S-adenosyl-L-methionine = 2-methyladenosine(37) in tRNA + 5'-deoxyadenosine + L-methionine + 2 oxidized [2Fe-2S]-[ferredoxin] + S-adenosyl-L-homocysteine</text>
        <dbReference type="Rhea" id="RHEA:43332"/>
        <dbReference type="Rhea" id="RHEA-COMP:10000"/>
        <dbReference type="Rhea" id="RHEA-COMP:10001"/>
        <dbReference type="Rhea" id="RHEA-COMP:10162"/>
        <dbReference type="Rhea" id="RHEA-COMP:10485"/>
        <dbReference type="ChEBI" id="CHEBI:17319"/>
        <dbReference type="ChEBI" id="CHEBI:33737"/>
        <dbReference type="ChEBI" id="CHEBI:33738"/>
        <dbReference type="ChEBI" id="CHEBI:57844"/>
        <dbReference type="ChEBI" id="CHEBI:57856"/>
        <dbReference type="ChEBI" id="CHEBI:59789"/>
        <dbReference type="ChEBI" id="CHEBI:74411"/>
        <dbReference type="ChEBI" id="CHEBI:74497"/>
        <dbReference type="EC" id="2.1.1.192"/>
    </reaction>
</comment>
<comment type="cofactor">
    <cofactor evidence="1">
        <name>[4Fe-4S] cluster</name>
        <dbReference type="ChEBI" id="CHEBI:49883"/>
    </cofactor>
    <text evidence="1">Binds 1 [4Fe-4S] cluster. The cluster is coordinated with 3 cysteines and an exchangeable S-adenosyl-L-methionine.</text>
</comment>
<comment type="subcellular location">
    <subcellularLocation>
        <location evidence="1">Cytoplasm</location>
    </subcellularLocation>
</comment>
<comment type="miscellaneous">
    <text evidence="1">Reaction proceeds by a ping-pong mechanism involving intermediate methylation of a conserved cysteine residue.</text>
</comment>
<comment type="similarity">
    <text evidence="1">Belongs to the radical SAM superfamily. RlmN family.</text>
</comment>
<evidence type="ECO:0000255" key="1">
    <source>
        <dbReference type="HAMAP-Rule" id="MF_01849"/>
    </source>
</evidence>
<evidence type="ECO:0000255" key="2">
    <source>
        <dbReference type="PROSITE-ProRule" id="PRU01266"/>
    </source>
</evidence>